<organism>
    <name type="scientific">Astragalus bisulcatus</name>
    <name type="common">Two-grooved milkvetch</name>
    <name type="synonym">Phaca bisulcata</name>
    <dbReference type="NCBI Taxonomy" id="20406"/>
    <lineage>
        <taxon>Eukaryota</taxon>
        <taxon>Viridiplantae</taxon>
        <taxon>Streptophyta</taxon>
        <taxon>Embryophyta</taxon>
        <taxon>Tracheophyta</taxon>
        <taxon>Spermatophyta</taxon>
        <taxon>Magnoliopsida</taxon>
        <taxon>eudicotyledons</taxon>
        <taxon>Gunneridae</taxon>
        <taxon>Pentapetalae</taxon>
        <taxon>rosids</taxon>
        <taxon>fabids</taxon>
        <taxon>Fabales</taxon>
        <taxon>Fabaceae</taxon>
        <taxon>Papilionoideae</taxon>
        <taxon>50 kb inversion clade</taxon>
        <taxon>NPAAA clade</taxon>
        <taxon>Hologalegina</taxon>
        <taxon>IRL clade</taxon>
        <taxon>Galegeae</taxon>
        <taxon>Astragalus</taxon>
    </lineage>
</organism>
<sequence>MSSPLITDFLHQAGRAAVIAGGLGTELQRHGADLNDPLWSAKCLLSCPHLIRQVHLDYLENGADIIITASYQATIQGFKAKGFSDEEGEALLRRSVEIAREARDLYYQRCAESSSDNGDDSRILKQRPILIAGSVGSYGAYLADGSEFSGNYGDAIKSETLKDFHRRKVQILADSGVDLLAFEAVPNKLEAQAYADLLEEENIITPAWFAFTSKDGNNVVSGDSIEECGSIAESCDKVVAVGINCTPPRFIHDLILLLKKVTAKPIVIYPNSGETYDAIRKEWGQNSGVTDEDFVSYVDKWCESGASLVGGCCRTTPDTIRGIYKILSSGQSPTFSAK</sequence>
<gene>
    <name type="primary">SMTA</name>
</gene>
<dbReference type="EC" id="2.1.1.280"/>
<dbReference type="EMBL" id="AJ131433">
    <property type="protein sequence ID" value="CAA10368.1"/>
    <property type="molecule type" value="mRNA"/>
</dbReference>
<dbReference type="PIR" id="T51940">
    <property type="entry name" value="T51940"/>
</dbReference>
<dbReference type="SMR" id="P56707"/>
<dbReference type="KEGG" id="ag:CAA10368"/>
<dbReference type="BioCyc" id="MetaCyc:MONOMER-15257"/>
<dbReference type="BRENDA" id="2.1.1.280">
    <property type="organism ID" value="557"/>
</dbReference>
<dbReference type="SABIO-RK" id="P56707"/>
<dbReference type="GO" id="GO:0008898">
    <property type="term" value="F:S-adenosylmethionine-homocysteine S-methyltransferase activity"/>
    <property type="evidence" value="ECO:0007669"/>
    <property type="project" value="TreeGrafter"/>
</dbReference>
<dbReference type="GO" id="GO:0016205">
    <property type="term" value="F:selenocysteine methyltransferase activity"/>
    <property type="evidence" value="ECO:0007669"/>
    <property type="project" value="UniProtKB-EC"/>
</dbReference>
<dbReference type="GO" id="GO:0008270">
    <property type="term" value="F:zinc ion binding"/>
    <property type="evidence" value="ECO:0007669"/>
    <property type="project" value="InterPro"/>
</dbReference>
<dbReference type="GO" id="GO:0009086">
    <property type="term" value="P:methionine biosynthetic process"/>
    <property type="evidence" value="ECO:0007669"/>
    <property type="project" value="InterPro"/>
</dbReference>
<dbReference type="GO" id="GO:0032259">
    <property type="term" value="P:methylation"/>
    <property type="evidence" value="ECO:0007669"/>
    <property type="project" value="UniProtKB-KW"/>
</dbReference>
<dbReference type="GO" id="GO:0033528">
    <property type="term" value="P:S-methylmethionine cycle"/>
    <property type="evidence" value="ECO:0007669"/>
    <property type="project" value="TreeGrafter"/>
</dbReference>
<dbReference type="FunFam" id="3.20.20.330:FF:000002">
    <property type="entry name" value="Homocysteine S-methyltransferase"/>
    <property type="match status" value="1"/>
</dbReference>
<dbReference type="Gene3D" id="3.20.20.330">
    <property type="entry name" value="Homocysteine-binding-like domain"/>
    <property type="match status" value="1"/>
</dbReference>
<dbReference type="InterPro" id="IPR017226">
    <property type="entry name" value="Betaine-hCys_S-MeTrfase_BHMT"/>
</dbReference>
<dbReference type="InterPro" id="IPR003726">
    <property type="entry name" value="HCY_dom"/>
</dbReference>
<dbReference type="InterPro" id="IPR036589">
    <property type="entry name" value="HCY_dom_sf"/>
</dbReference>
<dbReference type="InterPro" id="IPR051486">
    <property type="entry name" value="Hcy_S-methyltransferase"/>
</dbReference>
<dbReference type="NCBIfam" id="NF007020">
    <property type="entry name" value="PRK09485.1"/>
    <property type="match status" value="1"/>
</dbReference>
<dbReference type="PANTHER" id="PTHR46015:SF1">
    <property type="entry name" value="HOMOCYSTEINE S-METHYLTRANSFERASE-LIKE ISOFORM 1"/>
    <property type="match status" value="1"/>
</dbReference>
<dbReference type="PANTHER" id="PTHR46015">
    <property type="entry name" value="ZGC:172121"/>
    <property type="match status" value="1"/>
</dbReference>
<dbReference type="Pfam" id="PF02574">
    <property type="entry name" value="S-methyl_trans"/>
    <property type="match status" value="1"/>
</dbReference>
<dbReference type="PIRSF" id="PIRSF037505">
    <property type="entry name" value="Betaine_HMT"/>
    <property type="match status" value="1"/>
</dbReference>
<dbReference type="SUPFAM" id="SSF82282">
    <property type="entry name" value="Homocysteine S-methyltransferase"/>
    <property type="match status" value="1"/>
</dbReference>
<dbReference type="PROSITE" id="PS50970">
    <property type="entry name" value="HCY"/>
    <property type="match status" value="1"/>
</dbReference>
<keyword id="KW-0903">Direct protein sequencing</keyword>
<keyword id="KW-0479">Metal-binding</keyword>
<keyword id="KW-0489">Methyltransferase</keyword>
<keyword id="KW-0808">Transferase</keyword>
<keyword id="KW-0862">Zinc</keyword>
<evidence type="ECO:0000255" key="1">
    <source>
        <dbReference type="PROSITE-ProRule" id="PRU00333"/>
    </source>
</evidence>
<evidence type="ECO:0000269" key="2">
    <source>
    </source>
</evidence>
<evidence type="ECO:0000269" key="3">
    <source>
    </source>
</evidence>
<feature type="chain" id="PRO_0000114620" description="Selenocysteine methyltransferase">
    <location>
        <begin position="1"/>
        <end position="338"/>
    </location>
</feature>
<feature type="domain" description="Hcy-binding" evidence="1">
    <location>
        <begin position="1"/>
        <end position="327"/>
    </location>
</feature>
<feature type="binding site" evidence="1">
    <location>
        <position position="245"/>
    </location>
    <ligand>
        <name>Zn(2+)</name>
        <dbReference type="ChEBI" id="CHEBI:29105"/>
    </ligand>
</feature>
<feature type="binding site" evidence="1">
    <location>
        <position position="312"/>
    </location>
    <ligand>
        <name>Zn(2+)</name>
        <dbReference type="ChEBI" id="CHEBI:29105"/>
    </ligand>
</feature>
<feature type="binding site" evidence="1">
    <location>
        <position position="313"/>
    </location>
    <ligand>
        <name>Zn(2+)</name>
        <dbReference type="ChEBI" id="CHEBI:29105"/>
    </ligand>
</feature>
<accession>P56707</accession>
<accession>Q9ZRT7</accession>
<proteinExistence type="evidence at protein level"/>
<protein>
    <recommendedName>
        <fullName>Selenocysteine methyltransferase</fullName>
        <shortName>SECYS-MT</shortName>
        <shortName>SECYS-methyltransferase</shortName>
        <ecNumber>2.1.1.280</ecNumber>
    </recommendedName>
</protein>
<reference key="1">
    <citation type="journal article" date="1999" name="J. Biol. Chem.">
        <title>A family of S-methylmethionine-dependent thiol/selenol methyltransferases. Role in selenium tolerance and evolutionary relation.</title>
        <authorList>
            <person name="Neuhierl B."/>
            <person name="Thanbichler M."/>
            <person name="Lottspeich F."/>
            <person name="Boeck A."/>
        </authorList>
    </citation>
    <scope>NUCLEOTIDE SEQUENCE [MRNA]</scope>
    <scope>PROTEIN SEQUENCE OF 80-100; 126-135; 170-184; 189-202; 214-232; 264-179 AND 282-300</scope>
    <scope>IDENTIFICATION OF METHYL DONOR</scope>
    <scope>TISSUE SPECIFICITY</scope>
</reference>
<reference key="2">
    <citation type="journal article" date="1996" name="Eur. J. Biochem.">
        <title>On the mechanism of selenium tolerance in selenium-accumulating plants. Purification and characterization of a specific selenocysteine methyltransferase from cultured cells of Astragalus bisculatus.</title>
        <authorList>
            <person name="Neuhierl B."/>
            <person name="Boeck A."/>
        </authorList>
    </citation>
    <scope>CATALYTIC ACTIVITY</scope>
    <scope>SUBUNIT</scope>
    <scope>BIOPHYSICOCHEMICAL PROPERTIES</scope>
</reference>
<name>SMTA_ASTBI</name>
<comment type="function">
    <text>Catalyzes the methylation of selenocysteine with S-methylmethionine as donor. Does not methylate cysteine.</text>
</comment>
<comment type="catalytic activity">
    <reaction evidence="3">
        <text>S-methyl-L-methionine + L-selenocysteine = Se-methyl-L-selenocysteine + L-methionine + H(+)</text>
        <dbReference type="Rhea" id="RHEA:26341"/>
        <dbReference type="ChEBI" id="CHEBI:15378"/>
        <dbReference type="ChEBI" id="CHEBI:57843"/>
        <dbReference type="ChEBI" id="CHEBI:57844"/>
        <dbReference type="ChEBI" id="CHEBI:58252"/>
        <dbReference type="ChEBI" id="CHEBI:58531"/>
        <dbReference type="EC" id="2.1.1.280"/>
    </reaction>
</comment>
<comment type="cofactor">
    <cofactor evidence="1">
        <name>Zn(2+)</name>
        <dbReference type="ChEBI" id="CHEBI:29105"/>
    </cofactor>
</comment>
<comment type="biophysicochemical properties">
    <kinetics>
        <KM evidence="3">0.015 mM for S-adenosyl-L-methionine</KM>
        <KM evidence="3">0.7 mM for L-selenocysteine</KM>
        <KM evidence="3">0.35 mM for DL-selenohomocysteine</KM>
    </kinetics>
    <phDependence>
        <text evidence="3">Optimum pH is 6.0.</text>
    </phDependence>
</comment>
<comment type="subunit">
    <text evidence="3">Monomer.</text>
</comment>
<comment type="tissue specificity">
    <text evidence="2">Present in all tissues tested.</text>
</comment>